<evidence type="ECO:0000255" key="1">
    <source>
        <dbReference type="HAMAP-Rule" id="MF_01496"/>
    </source>
</evidence>
<reference key="1">
    <citation type="journal article" date="2006" name="BMC Evol. Biol.">
        <title>Complete plastid genome sequences of Drimys, Liriodendron, and Piper: implications for the phylogenetic relationships of magnoliids.</title>
        <authorList>
            <person name="Cai Z."/>
            <person name="Penaflor C."/>
            <person name="Kuehl J.V."/>
            <person name="Leebens-Mack J."/>
            <person name="Carlson J.E."/>
            <person name="dePamphilis C.W."/>
            <person name="Boore J.L."/>
            <person name="Jansen R.K."/>
        </authorList>
    </citation>
    <scope>NUCLEOTIDE SEQUENCE [LARGE SCALE GENOMIC DNA]</scope>
</reference>
<gene>
    <name evidence="1" type="primary">psbC</name>
</gene>
<protein>
    <recommendedName>
        <fullName evidence="1">Photosystem II CP43 reaction center protein</fullName>
    </recommendedName>
    <alternativeName>
        <fullName evidence="1">PSII 43 kDa protein</fullName>
    </alternativeName>
    <alternativeName>
        <fullName evidence="1">Protein CP-43</fullName>
    </alternativeName>
</protein>
<dbReference type="EMBL" id="DQ887676">
    <property type="protein sequence ID" value="ABH88293.1"/>
    <property type="molecule type" value="Genomic_DNA"/>
</dbReference>
<dbReference type="RefSeq" id="YP_784382.1">
    <property type="nucleotide sequence ID" value="NC_008456.1"/>
</dbReference>
<dbReference type="SMR" id="Q06H01"/>
<dbReference type="GeneID" id="4363543"/>
<dbReference type="GO" id="GO:0009535">
    <property type="term" value="C:chloroplast thylakoid membrane"/>
    <property type="evidence" value="ECO:0007669"/>
    <property type="project" value="UniProtKB-SubCell"/>
</dbReference>
<dbReference type="GO" id="GO:0009523">
    <property type="term" value="C:photosystem II"/>
    <property type="evidence" value="ECO:0007669"/>
    <property type="project" value="UniProtKB-KW"/>
</dbReference>
<dbReference type="GO" id="GO:0016168">
    <property type="term" value="F:chlorophyll binding"/>
    <property type="evidence" value="ECO:0007669"/>
    <property type="project" value="UniProtKB-UniRule"/>
</dbReference>
<dbReference type="GO" id="GO:0045156">
    <property type="term" value="F:electron transporter, transferring electrons within the cyclic electron transport pathway of photosynthesis activity"/>
    <property type="evidence" value="ECO:0007669"/>
    <property type="project" value="InterPro"/>
</dbReference>
<dbReference type="GO" id="GO:0046872">
    <property type="term" value="F:metal ion binding"/>
    <property type="evidence" value="ECO:0007669"/>
    <property type="project" value="UniProtKB-KW"/>
</dbReference>
<dbReference type="GO" id="GO:0009772">
    <property type="term" value="P:photosynthetic electron transport in photosystem II"/>
    <property type="evidence" value="ECO:0007669"/>
    <property type="project" value="InterPro"/>
</dbReference>
<dbReference type="FunFam" id="1.10.10.670:FF:000001">
    <property type="entry name" value="Photosystem II CP43 reaction center protein"/>
    <property type="match status" value="1"/>
</dbReference>
<dbReference type="Gene3D" id="1.10.10.670">
    <property type="entry name" value="photosystem ii from thermosynechococcus elongatus"/>
    <property type="match status" value="1"/>
</dbReference>
<dbReference type="HAMAP" id="MF_01496">
    <property type="entry name" value="PSII_PsbC_CP43"/>
    <property type="match status" value="1"/>
</dbReference>
<dbReference type="InterPro" id="IPR000932">
    <property type="entry name" value="PS_antenna-like"/>
</dbReference>
<dbReference type="InterPro" id="IPR036001">
    <property type="entry name" value="PS_II_antenna-like_sf"/>
</dbReference>
<dbReference type="InterPro" id="IPR005869">
    <property type="entry name" value="PSII_PsbC"/>
</dbReference>
<dbReference type="InterPro" id="IPR044900">
    <property type="entry name" value="PSII_PsbC_sf"/>
</dbReference>
<dbReference type="NCBIfam" id="TIGR01153">
    <property type="entry name" value="psbC"/>
    <property type="match status" value="1"/>
</dbReference>
<dbReference type="Pfam" id="PF00421">
    <property type="entry name" value="PSII"/>
    <property type="match status" value="1"/>
</dbReference>
<dbReference type="SUPFAM" id="SSF161077">
    <property type="entry name" value="Photosystem II antenna protein-like"/>
    <property type="match status" value="1"/>
</dbReference>
<name>PSBC_DRIGR</name>
<accession>Q06H01</accession>
<comment type="function">
    <text evidence="1">One of the components of the core complex of photosystem II (PSII). It binds chlorophyll and helps catalyze the primary light-induced photochemical processes of PSII. PSII is a light-driven water:plastoquinone oxidoreductase, using light energy to abstract electrons from H(2)O, generating O(2) and a proton gradient subsequently used for ATP formation.</text>
</comment>
<comment type="cofactor">
    <text evidence="1">Binds multiple chlorophylls and provides some of the ligands for the Ca-4Mn-5O cluster of the oxygen-evolving complex. It may also provide a ligand for a Cl- that is required for oxygen evolution. PSII binds additional chlorophylls, carotenoids and specific lipids.</text>
</comment>
<comment type="subunit">
    <text evidence="1">PSII is composed of 1 copy each of membrane proteins PsbA, PsbB, PsbC, PsbD, PsbE, PsbF, PsbH, PsbI, PsbJ, PsbK, PsbL, PsbM, PsbT, PsbX, PsbY, PsbZ, Psb30/Ycf12, at least 3 peripheral proteins of the oxygen-evolving complex and a large number of cofactors. It forms dimeric complexes.</text>
</comment>
<comment type="subcellular location">
    <subcellularLocation>
        <location evidence="1">Plastid</location>
        <location evidence="1">Chloroplast thylakoid membrane</location>
        <topology evidence="1">Multi-pass membrane protein</topology>
    </subcellularLocation>
</comment>
<comment type="similarity">
    <text evidence="1">Belongs to the PsbB/PsbC family. PsbC subfamily.</text>
</comment>
<geneLocation type="chloroplast"/>
<feature type="propeptide" id="PRO_0000431142" evidence="1">
    <location>
        <begin position="1"/>
        <end position="14"/>
    </location>
</feature>
<feature type="chain" id="PRO_0000361378" description="Photosystem II CP43 reaction center protein" evidence="1">
    <location>
        <begin position="15"/>
        <end position="473"/>
    </location>
</feature>
<feature type="transmembrane region" description="Helical" evidence="1">
    <location>
        <begin position="69"/>
        <end position="93"/>
    </location>
</feature>
<feature type="transmembrane region" description="Helical" evidence="1">
    <location>
        <begin position="134"/>
        <end position="155"/>
    </location>
</feature>
<feature type="transmembrane region" description="Helical" evidence="1">
    <location>
        <begin position="178"/>
        <end position="200"/>
    </location>
</feature>
<feature type="transmembrane region" description="Helical" evidence="1">
    <location>
        <begin position="255"/>
        <end position="275"/>
    </location>
</feature>
<feature type="transmembrane region" description="Helical" evidence="1">
    <location>
        <begin position="291"/>
        <end position="312"/>
    </location>
</feature>
<feature type="transmembrane region" description="Helical" evidence="1">
    <location>
        <begin position="447"/>
        <end position="471"/>
    </location>
</feature>
<feature type="binding site" evidence="1">
    <location>
        <position position="367"/>
    </location>
    <ligand>
        <name>[CaMn4O5] cluster</name>
        <dbReference type="ChEBI" id="CHEBI:189552"/>
    </ligand>
</feature>
<feature type="modified residue" description="N-acetylthreonine" evidence="1">
    <location>
        <position position="15"/>
    </location>
</feature>
<feature type="modified residue" description="Phosphothreonine" evidence="1">
    <location>
        <position position="15"/>
    </location>
</feature>
<organism>
    <name type="scientific">Drimys granadensis</name>
    <dbReference type="NCBI Taxonomy" id="224735"/>
    <lineage>
        <taxon>Eukaryota</taxon>
        <taxon>Viridiplantae</taxon>
        <taxon>Streptophyta</taxon>
        <taxon>Embryophyta</taxon>
        <taxon>Tracheophyta</taxon>
        <taxon>Spermatophyta</taxon>
        <taxon>Magnoliopsida</taxon>
        <taxon>Magnoliidae</taxon>
        <taxon>Canellales</taxon>
        <taxon>Winteraceae</taxon>
        <taxon>Drimys</taxon>
    </lineage>
</organism>
<sequence>MKTLYSLRRFYPVETLFNGTLALAGRDQETTGFAWWAGNARLINLSGKLLGAHVAHAGLIVFWAGAMNLFEVAHFVPEKPMYEQGLILLPHLATLGWGVGPGGEVIDTFPYFVSGVLHLISSAVLGFGGIYHALLGPETLEESFPFFGYVWKDRNKMTTILGIHLILLGIGAFLLVLKALYFGGVYDTWAPGGGDVRKITNLTLSPSVIFGYLLKSPFGGEGWIVSVDDLEDIIGGHIWLGSICILGGIWHILTKPFAWARRAFVWSGEAYLSYSLAALSVFGFIACCFVWFNNTAYPSEFYGPTGPEASQAQAFTFLVRDQRLGANVGSAQGPTGLGKYLMRSPTGEVIFGGETMRFWDLRAPWLEPLRGPNGLDLSRLKKDIQPWQERRSAEYMTHAPLGSLNSVGGVATEINAVNYVSPRSWLATSHFVLGFFLFVGHLWHAGRARAAAAGFEKGIDRDFEPVLSMTPLN</sequence>
<proteinExistence type="inferred from homology"/>
<keyword id="KW-0007">Acetylation</keyword>
<keyword id="KW-0148">Chlorophyll</keyword>
<keyword id="KW-0150">Chloroplast</keyword>
<keyword id="KW-0157">Chromophore</keyword>
<keyword id="KW-0464">Manganese</keyword>
<keyword id="KW-0472">Membrane</keyword>
<keyword id="KW-0479">Metal-binding</keyword>
<keyword id="KW-0597">Phosphoprotein</keyword>
<keyword id="KW-0602">Photosynthesis</keyword>
<keyword id="KW-0604">Photosystem II</keyword>
<keyword id="KW-0934">Plastid</keyword>
<keyword id="KW-0793">Thylakoid</keyword>
<keyword id="KW-0812">Transmembrane</keyword>
<keyword id="KW-1133">Transmembrane helix</keyword>